<protein>
    <recommendedName>
        <fullName evidence="1">Small ribosomal subunit protein uS4</fullName>
    </recommendedName>
    <alternativeName>
        <fullName evidence="2">30S ribosomal protein S4</fullName>
    </alternativeName>
</protein>
<gene>
    <name evidence="1" type="primary">rpsD</name>
    <name type="ordered locus">cu0360</name>
</gene>
<reference key="1">
    <citation type="journal article" date="2008" name="J. Biotechnol.">
        <title>The lifestyle of Corynebacterium urealyticum derived from its complete genome sequence established by pyrosequencing.</title>
        <authorList>
            <person name="Tauch A."/>
            <person name="Trost E."/>
            <person name="Tilker A."/>
            <person name="Ludewig U."/>
            <person name="Schneiker S."/>
            <person name="Goesmann A."/>
            <person name="Arnold W."/>
            <person name="Bekel T."/>
            <person name="Brinkrolf K."/>
            <person name="Brune I."/>
            <person name="Goetker S."/>
            <person name="Kalinowski J."/>
            <person name="Kamp P.-B."/>
            <person name="Lobo F.P."/>
            <person name="Viehoever P."/>
            <person name="Weisshaar B."/>
            <person name="Soriano F."/>
            <person name="Droege M."/>
            <person name="Puehler A."/>
        </authorList>
    </citation>
    <scope>NUCLEOTIDE SEQUENCE [LARGE SCALE GENOMIC DNA]</scope>
    <source>
        <strain>ATCC 43042 / DSM 7109</strain>
    </source>
</reference>
<dbReference type="EMBL" id="AM942444">
    <property type="protein sequence ID" value="CAQ04320.1"/>
    <property type="molecule type" value="Genomic_DNA"/>
</dbReference>
<dbReference type="RefSeq" id="WP_012359613.1">
    <property type="nucleotide sequence ID" value="NC_010545.1"/>
</dbReference>
<dbReference type="SMR" id="B1VEY1"/>
<dbReference type="STRING" id="504474.cu0360"/>
<dbReference type="GeneID" id="60605163"/>
<dbReference type="KEGG" id="cur:cu0360"/>
<dbReference type="eggNOG" id="COG0522">
    <property type="taxonomic scope" value="Bacteria"/>
</dbReference>
<dbReference type="HOGENOM" id="CLU_092403_0_2_11"/>
<dbReference type="Proteomes" id="UP000001727">
    <property type="component" value="Chromosome"/>
</dbReference>
<dbReference type="GO" id="GO:0015935">
    <property type="term" value="C:small ribosomal subunit"/>
    <property type="evidence" value="ECO:0007669"/>
    <property type="project" value="InterPro"/>
</dbReference>
<dbReference type="GO" id="GO:0019843">
    <property type="term" value="F:rRNA binding"/>
    <property type="evidence" value="ECO:0007669"/>
    <property type="project" value="UniProtKB-UniRule"/>
</dbReference>
<dbReference type="GO" id="GO:0003735">
    <property type="term" value="F:structural constituent of ribosome"/>
    <property type="evidence" value="ECO:0007669"/>
    <property type="project" value="InterPro"/>
</dbReference>
<dbReference type="GO" id="GO:0042274">
    <property type="term" value="P:ribosomal small subunit biogenesis"/>
    <property type="evidence" value="ECO:0007669"/>
    <property type="project" value="TreeGrafter"/>
</dbReference>
<dbReference type="GO" id="GO:0006412">
    <property type="term" value="P:translation"/>
    <property type="evidence" value="ECO:0007669"/>
    <property type="project" value="UniProtKB-UniRule"/>
</dbReference>
<dbReference type="CDD" id="cd00165">
    <property type="entry name" value="S4"/>
    <property type="match status" value="1"/>
</dbReference>
<dbReference type="FunFam" id="3.10.290.10:FF:000001">
    <property type="entry name" value="30S ribosomal protein S4"/>
    <property type="match status" value="1"/>
</dbReference>
<dbReference type="Gene3D" id="1.10.1050.10">
    <property type="entry name" value="Ribosomal Protein S4 Delta 41, Chain A, domain 1"/>
    <property type="match status" value="1"/>
</dbReference>
<dbReference type="Gene3D" id="3.10.290.10">
    <property type="entry name" value="RNA-binding S4 domain"/>
    <property type="match status" value="1"/>
</dbReference>
<dbReference type="HAMAP" id="MF_01306_B">
    <property type="entry name" value="Ribosomal_uS4_B"/>
    <property type="match status" value="1"/>
</dbReference>
<dbReference type="InterPro" id="IPR022801">
    <property type="entry name" value="Ribosomal_uS4"/>
</dbReference>
<dbReference type="InterPro" id="IPR005709">
    <property type="entry name" value="Ribosomal_uS4_bac-type"/>
</dbReference>
<dbReference type="InterPro" id="IPR018079">
    <property type="entry name" value="Ribosomal_uS4_CS"/>
</dbReference>
<dbReference type="InterPro" id="IPR001912">
    <property type="entry name" value="Ribosomal_uS4_N"/>
</dbReference>
<dbReference type="InterPro" id="IPR002942">
    <property type="entry name" value="S4_RNA-bd"/>
</dbReference>
<dbReference type="InterPro" id="IPR036986">
    <property type="entry name" value="S4_RNA-bd_sf"/>
</dbReference>
<dbReference type="NCBIfam" id="NF003717">
    <property type="entry name" value="PRK05327.1"/>
    <property type="match status" value="1"/>
</dbReference>
<dbReference type="NCBIfam" id="TIGR01017">
    <property type="entry name" value="rpsD_bact"/>
    <property type="match status" value="1"/>
</dbReference>
<dbReference type="PANTHER" id="PTHR11831">
    <property type="entry name" value="30S 40S RIBOSOMAL PROTEIN"/>
    <property type="match status" value="1"/>
</dbReference>
<dbReference type="PANTHER" id="PTHR11831:SF4">
    <property type="entry name" value="SMALL RIBOSOMAL SUBUNIT PROTEIN US4M"/>
    <property type="match status" value="1"/>
</dbReference>
<dbReference type="Pfam" id="PF00163">
    <property type="entry name" value="Ribosomal_S4"/>
    <property type="match status" value="1"/>
</dbReference>
<dbReference type="Pfam" id="PF01479">
    <property type="entry name" value="S4"/>
    <property type="match status" value="1"/>
</dbReference>
<dbReference type="SMART" id="SM01390">
    <property type="entry name" value="Ribosomal_S4"/>
    <property type="match status" value="1"/>
</dbReference>
<dbReference type="SMART" id="SM00363">
    <property type="entry name" value="S4"/>
    <property type="match status" value="1"/>
</dbReference>
<dbReference type="SUPFAM" id="SSF55174">
    <property type="entry name" value="Alpha-L RNA-binding motif"/>
    <property type="match status" value="1"/>
</dbReference>
<dbReference type="PROSITE" id="PS00632">
    <property type="entry name" value="RIBOSOMAL_S4"/>
    <property type="match status" value="1"/>
</dbReference>
<dbReference type="PROSITE" id="PS50889">
    <property type="entry name" value="S4"/>
    <property type="match status" value="1"/>
</dbReference>
<sequence length="201" mass="23389">MARYTGPVTRKSRRLRVDLVGGDRSFERRPYPPGQAGRARIKESEYLIQLQEKQKARFTYGVMEKQFRRYYAEANAMPGKTGDNLVILLEARLDNVIYRAGLARTRRQARQLVSHGHFTVNGKKINVPSFRVSQYDIIDVRDRSRSMLWFDEAQDNLVDANVPAWLQVVPSTLRILVHQLPERAQIDIPLQEQLIVEYYSK</sequence>
<organism>
    <name type="scientific">Corynebacterium urealyticum (strain ATCC 43042 / DSM 7109)</name>
    <dbReference type="NCBI Taxonomy" id="504474"/>
    <lineage>
        <taxon>Bacteria</taxon>
        <taxon>Bacillati</taxon>
        <taxon>Actinomycetota</taxon>
        <taxon>Actinomycetes</taxon>
        <taxon>Mycobacteriales</taxon>
        <taxon>Corynebacteriaceae</taxon>
        <taxon>Corynebacterium</taxon>
    </lineage>
</organism>
<proteinExistence type="inferred from homology"/>
<evidence type="ECO:0000255" key="1">
    <source>
        <dbReference type="HAMAP-Rule" id="MF_01306"/>
    </source>
</evidence>
<evidence type="ECO:0000305" key="2"/>
<comment type="function">
    <text evidence="1">One of the primary rRNA binding proteins, it binds directly to 16S rRNA where it nucleates assembly of the body of the 30S subunit.</text>
</comment>
<comment type="function">
    <text evidence="1">With S5 and S12 plays an important role in translational accuracy.</text>
</comment>
<comment type="subunit">
    <text evidence="1">Part of the 30S ribosomal subunit. Contacts protein S5. The interaction surface between S4 and S5 is involved in control of translational fidelity.</text>
</comment>
<comment type="similarity">
    <text evidence="1">Belongs to the universal ribosomal protein uS4 family.</text>
</comment>
<feature type="chain" id="PRO_1000140711" description="Small ribosomal subunit protein uS4">
    <location>
        <begin position="1"/>
        <end position="201"/>
    </location>
</feature>
<feature type="domain" description="S4 RNA-binding" evidence="1">
    <location>
        <begin position="91"/>
        <end position="151"/>
    </location>
</feature>
<keyword id="KW-1185">Reference proteome</keyword>
<keyword id="KW-0687">Ribonucleoprotein</keyword>
<keyword id="KW-0689">Ribosomal protein</keyword>
<keyword id="KW-0694">RNA-binding</keyword>
<keyword id="KW-0699">rRNA-binding</keyword>
<name>RS4_CORU7</name>
<accession>B1VEY1</accession>